<reference key="1">
    <citation type="journal article" date="2004" name="Biosci. Biotechnol. Biochem.">
        <title>Identification and cloning of the gene involved in the final step of chlortetracycline biosynthesis in Streptomyces aureofaciens.</title>
        <authorList>
            <person name="Nakano T."/>
            <person name="Miyake K."/>
            <person name="Endo H."/>
            <person name="Dairi T."/>
            <person name="Mizukami T."/>
            <person name="Katsumata R."/>
        </authorList>
    </citation>
    <scope>NUCLEOTIDE SEQUENCE [GENOMIC DNA]</scope>
    <source>
        <strain>HP77</strain>
    </source>
</reference>
<comment type="function">
    <text evidence="1">Bifunctional enzyme that catalyzes the GTP-dependent successive addition of two or more gamma-linked L-glutamates to the L-lactyl phosphodiester of 7,8-didemethyl-8-hydroxy-5-deazariboflavin (F420-0) to form polyglutamated F420 derivatives, and the FMNH2-dependent reduction of dehydro-F420-0 to form F420-0.</text>
</comment>
<comment type="catalytic activity">
    <reaction evidence="1">
        <text>oxidized coenzyme F420-0 + GTP + L-glutamate = oxidized coenzyme F420-1 + GDP + phosphate + H(+)</text>
        <dbReference type="Rhea" id="RHEA:30555"/>
        <dbReference type="ChEBI" id="CHEBI:15378"/>
        <dbReference type="ChEBI" id="CHEBI:29985"/>
        <dbReference type="ChEBI" id="CHEBI:37565"/>
        <dbReference type="ChEBI" id="CHEBI:43474"/>
        <dbReference type="ChEBI" id="CHEBI:58189"/>
        <dbReference type="ChEBI" id="CHEBI:59907"/>
        <dbReference type="ChEBI" id="CHEBI:59920"/>
        <dbReference type="EC" id="6.3.2.31"/>
    </reaction>
</comment>
<comment type="catalytic activity">
    <reaction evidence="1">
        <text>oxidized coenzyme F420-0 + FMN + H(+) = dehydro coenzyme F420-0 + FMNH2</text>
        <dbReference type="Rhea" id="RHEA:60360"/>
        <dbReference type="ChEBI" id="CHEBI:15378"/>
        <dbReference type="ChEBI" id="CHEBI:57618"/>
        <dbReference type="ChEBI" id="CHEBI:58210"/>
        <dbReference type="ChEBI" id="CHEBI:59907"/>
        <dbReference type="ChEBI" id="CHEBI:143705"/>
        <dbReference type="EC" id="1.3.8.17"/>
    </reaction>
</comment>
<comment type="catalytic activity">
    <reaction evidence="1">
        <text>oxidized coenzyme F420-1 + GTP + L-glutamate = oxidized coenzyme F420-2 + GDP + phosphate + H(+)</text>
        <dbReference type="Rhea" id="RHEA:30523"/>
        <dbReference type="ChEBI" id="CHEBI:15378"/>
        <dbReference type="ChEBI" id="CHEBI:29985"/>
        <dbReference type="ChEBI" id="CHEBI:37565"/>
        <dbReference type="ChEBI" id="CHEBI:43474"/>
        <dbReference type="ChEBI" id="CHEBI:57922"/>
        <dbReference type="ChEBI" id="CHEBI:58189"/>
        <dbReference type="ChEBI" id="CHEBI:59920"/>
        <dbReference type="EC" id="6.3.2.34"/>
    </reaction>
</comment>
<comment type="cofactor">
    <cofactor evidence="1">
        <name>Mg(2+)</name>
        <dbReference type="ChEBI" id="CHEBI:18420"/>
    </cofactor>
    <cofactor evidence="1">
        <name>Mn(2+)</name>
        <dbReference type="ChEBI" id="CHEBI:29035"/>
    </cofactor>
    <text evidence="1">Binds 2 divalent metal cations per subunit. The ions could be magnesium and/or manganese.</text>
</comment>
<comment type="cofactor">
    <cofactor evidence="1">
        <name>K(+)</name>
        <dbReference type="ChEBI" id="CHEBI:29103"/>
    </cofactor>
    <text evidence="1">Monovalent cation. The ion could be potassium.</text>
</comment>
<comment type="pathway">
    <text evidence="1">Cofactor biosynthesis; coenzyme F420 biosynthesis.</text>
</comment>
<comment type="similarity">
    <text evidence="1">In the N-terminal section; belongs to the CofE family.</text>
</comment>
<comment type="caution">
    <text evidence="3">Was originally (PubMed:15215601) thought to be a probable tetracycline dehydrogenase since it is essential to the final reaction in the biosynthesis of 6-demethyltetracycline, but enzymatic activity has not been proven. Several facts suggest it is more likely to be a coenzyme F420:L-glutamate ligase: it is a homolog of the characterized protein CofE from Methanococcus jannaschii and FbiB from Mycobacterium smegmatis which are involved in the polyglutamylation of F420-0; F420 is used for tetracycline biosynthesis, probably being necessary for the last step; the gene coding for this protein is close to a homolog of the characterized protein CofD from Methanococcus jannaschii involved in F420-0 production.</text>
</comment>
<comment type="sequence caution" evidence="2">
    <conflict type="frameshift">
        <sequence resource="EMBL-CDS" id="BAD16617"/>
    </conflict>
</comment>
<gene>
    <name evidence="1" type="primary">fbiB</name>
    <name type="synonym">tchA</name>
</gene>
<dbReference type="EC" id="6.3.2.31" evidence="1"/>
<dbReference type="EC" id="6.3.2.34" evidence="1"/>
<dbReference type="EC" id="1.3.8.17" evidence="1"/>
<dbReference type="EMBL" id="AB125899">
    <property type="protein sequence ID" value="BAD16617.1"/>
    <property type="status" value="ALT_FRAME"/>
    <property type="molecule type" value="Genomic_DNA"/>
</dbReference>
<dbReference type="SMR" id="Q75UN0"/>
<dbReference type="eggNOG" id="COG0778">
    <property type="taxonomic scope" value="Bacteria"/>
</dbReference>
<dbReference type="eggNOG" id="COG1478">
    <property type="taxonomic scope" value="Bacteria"/>
</dbReference>
<dbReference type="UniPathway" id="UPA00071"/>
<dbReference type="GO" id="GO:0052618">
    <property type="term" value="F:coenzyme F420-0:L-glutamate ligase activity"/>
    <property type="evidence" value="ECO:0007669"/>
    <property type="project" value="UniProtKB-EC"/>
</dbReference>
<dbReference type="GO" id="GO:0052619">
    <property type="term" value="F:coenzyme F420-1:gamma-L-glutamate ligase activity"/>
    <property type="evidence" value="ECO:0007669"/>
    <property type="project" value="UniProtKB-EC"/>
</dbReference>
<dbReference type="GO" id="GO:0005525">
    <property type="term" value="F:GTP binding"/>
    <property type="evidence" value="ECO:0007669"/>
    <property type="project" value="UniProtKB-KW"/>
</dbReference>
<dbReference type="GO" id="GO:0046872">
    <property type="term" value="F:metal ion binding"/>
    <property type="evidence" value="ECO:0007669"/>
    <property type="project" value="UniProtKB-KW"/>
</dbReference>
<dbReference type="GO" id="GO:0016491">
    <property type="term" value="F:oxidoreductase activity"/>
    <property type="evidence" value="ECO:0007669"/>
    <property type="project" value="UniProtKB-KW"/>
</dbReference>
<dbReference type="FunFam" id="3.40.109.10:FF:000009">
    <property type="entry name" value="Coenzyme F420:L-glutamate ligase"/>
    <property type="match status" value="1"/>
</dbReference>
<dbReference type="Gene3D" id="3.30.1330.100">
    <property type="entry name" value="CofE-like"/>
    <property type="match status" value="2"/>
</dbReference>
<dbReference type="Gene3D" id="3.40.109.10">
    <property type="entry name" value="NADH Oxidase"/>
    <property type="match status" value="1"/>
</dbReference>
<dbReference type="HAMAP" id="MF_01259">
    <property type="entry name" value="F420_ligase_FbiB"/>
    <property type="match status" value="1"/>
</dbReference>
<dbReference type="InterPro" id="IPR008225">
    <property type="entry name" value="F420-0_g-glutamyl_ligase"/>
</dbReference>
<dbReference type="InterPro" id="IPR002847">
    <property type="entry name" value="F420-0_gamma-glut_ligase-dom"/>
</dbReference>
<dbReference type="InterPro" id="IPR019943">
    <property type="entry name" value="F420_FbiB_C"/>
</dbReference>
<dbReference type="InterPro" id="IPR023661">
    <property type="entry name" value="FbiB"/>
</dbReference>
<dbReference type="InterPro" id="IPR029479">
    <property type="entry name" value="Nitroreductase"/>
</dbReference>
<dbReference type="InterPro" id="IPR000415">
    <property type="entry name" value="Nitroreductase-like"/>
</dbReference>
<dbReference type="NCBIfam" id="TIGR01916">
    <property type="entry name" value="F420_cofE"/>
    <property type="match status" value="1"/>
</dbReference>
<dbReference type="NCBIfam" id="TIGR03553">
    <property type="entry name" value="F420_FbiB_CTERM"/>
    <property type="match status" value="1"/>
</dbReference>
<dbReference type="NCBIfam" id="NF009810">
    <property type="entry name" value="PRK13294.1"/>
    <property type="match status" value="1"/>
</dbReference>
<dbReference type="PANTHER" id="PTHR47917">
    <property type="match status" value="1"/>
</dbReference>
<dbReference type="PANTHER" id="PTHR47917:SF1">
    <property type="entry name" value="COENZYME F420:L-GLUTAMATE LIGASE"/>
    <property type="match status" value="1"/>
</dbReference>
<dbReference type="Pfam" id="PF01996">
    <property type="entry name" value="F420_ligase"/>
    <property type="match status" value="1"/>
</dbReference>
<dbReference type="Pfam" id="PF00881">
    <property type="entry name" value="Nitroreductase"/>
    <property type="match status" value="1"/>
</dbReference>
<dbReference type="SUPFAM" id="SSF144010">
    <property type="entry name" value="CofE-like"/>
    <property type="match status" value="1"/>
</dbReference>
<dbReference type="SUPFAM" id="SSF55469">
    <property type="entry name" value="FMN-dependent nitroreductase-like"/>
    <property type="match status" value="1"/>
</dbReference>
<evidence type="ECO:0000255" key="1">
    <source>
        <dbReference type="HAMAP-Rule" id="MF_01259"/>
    </source>
</evidence>
<evidence type="ECO:0000305" key="2"/>
<evidence type="ECO:0000305" key="3">
    <source>
    </source>
</evidence>
<sequence length="429" mass="45624">MALEILGVEGIPEVDAGADLAGLIAKAGTYRDGDILLVTSKVVSKAEGRLLHAADRDAAIDAETVRVVARRGPARIVENRNGFVMAAAGVDASNTAPGTVLLLPEDPDASARALRSRLQQLTGCRLAVVVTDTFGRPWRNGLTDVAIGAAGLSVLEDHRGRTDSHGNELVLTVTATADELAAAADLVKGKATGVPVAIVRGLGHLVTAEDGAGTRPLVRAAADDMFRLGTSEALRQAVTLRRTVRSFTTDPVDPAAVRRAVAAAVTAPAPHHTTPWRFVLLESAGTRVRLLDAMLGAWQRDLRELDGWDEARIARRTARGDVLRDAPYLVVPCLVMDGSHDYPDPRRAAAEREMFTVAAGAGVQNLLVALTGEGYGSAWVSSTMFCRDTVREVLDLPEGWDPMGAVAVGRPAEVPRERRREAEAFVEVR</sequence>
<keyword id="KW-0342">GTP-binding</keyword>
<keyword id="KW-0436">Ligase</keyword>
<keyword id="KW-0460">Magnesium</keyword>
<keyword id="KW-0464">Manganese</keyword>
<keyword id="KW-0479">Metal-binding</keyword>
<keyword id="KW-0511">Multifunctional enzyme</keyword>
<keyword id="KW-0547">Nucleotide-binding</keyword>
<keyword id="KW-0560">Oxidoreductase</keyword>
<keyword id="KW-0630">Potassium</keyword>
<accession>Q75UN0</accession>
<protein>
    <recommendedName>
        <fullName evidence="1">Bifunctional F420 biosynthesis protein FbiB</fullName>
    </recommendedName>
    <domain>
        <recommendedName>
            <fullName evidence="1">Coenzyme F420:L-glutamate ligase</fullName>
            <ecNumber evidence="1">6.3.2.31</ecNumber>
            <ecNumber evidence="1">6.3.2.34</ecNumber>
        </recommendedName>
        <alternativeName>
            <fullName evidence="1">Coenzyme F420-0:L-glutamate ligase</fullName>
        </alternativeName>
        <alternativeName>
            <fullName evidence="1">Coenzyme F420-1:gamma-L-glutamate ligase</fullName>
        </alternativeName>
    </domain>
    <domain>
        <recommendedName>
            <fullName evidence="1">Dehydro-coenzyme F420-0 reductase</fullName>
            <ecNumber evidence="1">1.3.8.17</ecNumber>
        </recommendedName>
    </domain>
</protein>
<organism>
    <name type="scientific">Kitasatospora aureofaciens</name>
    <name type="common">Streptomyces aureofaciens</name>
    <dbReference type="NCBI Taxonomy" id="1894"/>
    <lineage>
        <taxon>Bacteria</taxon>
        <taxon>Bacillati</taxon>
        <taxon>Actinomycetota</taxon>
        <taxon>Actinomycetes</taxon>
        <taxon>Kitasatosporales</taxon>
        <taxon>Streptomycetaceae</taxon>
        <taxon>Kitasatospora</taxon>
    </lineage>
</organism>
<proteinExistence type="inferred from homology"/>
<feature type="chain" id="PRO_0000145782" description="Bifunctional F420 biosynthesis protein FbiB">
    <location>
        <begin position="1"/>
        <end position="429"/>
    </location>
</feature>
<feature type="region of interest" description="Coenzyme F420:L-glutamate ligase" evidence="1">
    <location>
        <begin position="1"/>
        <end position="229"/>
    </location>
</feature>
<feature type="region of interest" description="Dehydro-coenzyme F420-0 reductase" evidence="1">
    <location>
        <begin position="230"/>
        <end position="429"/>
    </location>
</feature>
<feature type="binding site" evidence="1">
    <location>
        <begin position="11"/>
        <end position="14"/>
    </location>
    <ligand>
        <name>GTP</name>
        <dbReference type="ChEBI" id="CHEBI:37565"/>
    </ligand>
</feature>
<feature type="binding site" evidence="1">
    <location>
        <position position="40"/>
    </location>
    <ligand>
        <name>GTP</name>
        <dbReference type="ChEBI" id="CHEBI:37565"/>
    </ligand>
</feature>
<feature type="binding site" evidence="1">
    <location>
        <position position="45"/>
    </location>
    <ligand>
        <name>GTP</name>
        <dbReference type="ChEBI" id="CHEBI:37565"/>
    </ligand>
</feature>
<feature type="binding site" evidence="1">
    <location>
        <position position="91"/>
    </location>
    <ligand>
        <name>a divalent metal cation</name>
        <dbReference type="ChEBI" id="CHEBI:60240"/>
        <label>1</label>
    </ligand>
</feature>
<feature type="binding site" evidence="1">
    <location>
        <position position="94"/>
    </location>
    <ligand>
        <name>GTP</name>
        <dbReference type="ChEBI" id="CHEBI:37565"/>
    </ligand>
</feature>
<feature type="binding site" evidence="1">
    <location>
        <position position="132"/>
    </location>
    <ligand>
        <name>a divalent metal cation</name>
        <dbReference type="ChEBI" id="CHEBI:60240"/>
        <label>1</label>
    </ligand>
</feature>
<feature type="binding site" evidence="1">
    <location>
        <position position="133"/>
    </location>
    <ligand>
        <name>a divalent metal cation</name>
        <dbReference type="ChEBI" id="CHEBI:60240"/>
        <label>2</label>
    </ligand>
</feature>
<feature type="binding site" evidence="1">
    <location>
        <position position="269"/>
    </location>
    <ligand>
        <name>FMN</name>
        <dbReference type="ChEBI" id="CHEBI:58210"/>
    </ligand>
</feature>
<feature type="binding site" evidence="1">
    <location>
        <position position="301"/>
    </location>
    <ligand>
        <name>coenzyme F420-(gamma-Glu)n</name>
        <dbReference type="ChEBI" id="CHEBI:133980"/>
    </ligand>
</feature>
<feature type="binding site" evidence="1">
    <location>
        <position position="381"/>
    </location>
    <ligand>
        <name>FMN</name>
        <dbReference type="ChEBI" id="CHEBI:58210"/>
    </ligand>
</feature>
<feature type="binding site" evidence="1">
    <location>
        <position position="418"/>
    </location>
    <ligand>
        <name>FMN</name>
        <dbReference type="ChEBI" id="CHEBI:58210"/>
    </ligand>
</feature>
<name>FBIB_KITAU</name>